<feature type="chain" id="PRO_1000003630" description="Small ribosomal subunit protein bS18">
    <location>
        <begin position="1"/>
        <end position="79"/>
    </location>
</feature>
<protein>
    <recommendedName>
        <fullName evidence="1">Small ribosomal subunit protein bS18</fullName>
    </recommendedName>
    <alternativeName>
        <fullName evidence="2">30S ribosomal protein S18</fullName>
    </alternativeName>
</protein>
<comment type="function">
    <text evidence="1">Binds as a heterodimer with protein bS6 to the central domain of the 16S rRNA, where it helps stabilize the platform of the 30S subunit.</text>
</comment>
<comment type="subunit">
    <text evidence="1">Part of the 30S ribosomal subunit. Forms a tight heterodimer with protein bS6.</text>
</comment>
<comment type="similarity">
    <text evidence="1">Belongs to the bacterial ribosomal protein bS18 family.</text>
</comment>
<name>RS18_STRPG</name>
<sequence length="79" mass="9204">MAQQRRGGFKRRKKVDFIAANKIEYVDYKDTELLSRFVSERGKILPRRVTGTSAKNQRKVTTAIKRARVMALMPYVNED</sequence>
<reference key="1">
    <citation type="journal article" date="2007" name="J. Bacteriol.">
        <title>Complete genome of acute rheumatic fever-associated serotype M5 Streptococcus pyogenes strain Manfredo.</title>
        <authorList>
            <person name="Holden M.T.G."/>
            <person name="Scott A."/>
            <person name="Cherevach I."/>
            <person name="Chillingworth T."/>
            <person name="Churcher C."/>
            <person name="Cronin A."/>
            <person name="Dowd L."/>
            <person name="Feltwell T."/>
            <person name="Hamlin N."/>
            <person name="Holroyd S."/>
            <person name="Jagels K."/>
            <person name="Moule S."/>
            <person name="Mungall K."/>
            <person name="Quail M.A."/>
            <person name="Price C."/>
            <person name="Rabbinowitsch E."/>
            <person name="Sharp S."/>
            <person name="Skelton J."/>
            <person name="Whitehead S."/>
            <person name="Barrell B.G."/>
            <person name="Kehoe M."/>
            <person name="Parkhill J."/>
        </authorList>
    </citation>
    <scope>NUCLEOTIDE SEQUENCE [LARGE SCALE GENOMIC DNA]</scope>
    <source>
        <strain>Manfredo</strain>
    </source>
</reference>
<organism>
    <name type="scientific">Streptococcus pyogenes serotype M5 (strain Manfredo)</name>
    <dbReference type="NCBI Taxonomy" id="160491"/>
    <lineage>
        <taxon>Bacteria</taxon>
        <taxon>Bacillati</taxon>
        <taxon>Bacillota</taxon>
        <taxon>Bacilli</taxon>
        <taxon>Lactobacillales</taxon>
        <taxon>Streptococcaceae</taxon>
        <taxon>Streptococcus</taxon>
    </lineage>
</organism>
<accession>A2RCR6</accession>
<proteinExistence type="inferred from homology"/>
<keyword id="KW-0687">Ribonucleoprotein</keyword>
<keyword id="KW-0689">Ribosomal protein</keyword>
<keyword id="KW-0694">RNA-binding</keyword>
<keyword id="KW-0699">rRNA-binding</keyword>
<gene>
    <name evidence="1" type="primary">rpsR</name>
    <name type="ordered locus">SpyM50297</name>
</gene>
<evidence type="ECO:0000255" key="1">
    <source>
        <dbReference type="HAMAP-Rule" id="MF_00270"/>
    </source>
</evidence>
<evidence type="ECO:0000305" key="2"/>
<dbReference type="EMBL" id="AM295007">
    <property type="protein sequence ID" value="CAM29639.1"/>
    <property type="molecule type" value="Genomic_DNA"/>
</dbReference>
<dbReference type="RefSeq" id="WP_002983142.1">
    <property type="nucleotide sequence ID" value="NC_009332.1"/>
</dbReference>
<dbReference type="SMR" id="A2RCR6"/>
<dbReference type="GeneID" id="93826879"/>
<dbReference type="KEGG" id="spf:SpyM50297"/>
<dbReference type="HOGENOM" id="CLU_148710_2_2_9"/>
<dbReference type="GO" id="GO:0022627">
    <property type="term" value="C:cytosolic small ribosomal subunit"/>
    <property type="evidence" value="ECO:0007669"/>
    <property type="project" value="TreeGrafter"/>
</dbReference>
<dbReference type="GO" id="GO:0070181">
    <property type="term" value="F:small ribosomal subunit rRNA binding"/>
    <property type="evidence" value="ECO:0007669"/>
    <property type="project" value="TreeGrafter"/>
</dbReference>
<dbReference type="GO" id="GO:0003735">
    <property type="term" value="F:structural constituent of ribosome"/>
    <property type="evidence" value="ECO:0007669"/>
    <property type="project" value="InterPro"/>
</dbReference>
<dbReference type="GO" id="GO:0006412">
    <property type="term" value="P:translation"/>
    <property type="evidence" value="ECO:0007669"/>
    <property type="project" value="UniProtKB-UniRule"/>
</dbReference>
<dbReference type="FunFam" id="4.10.640.10:FF:000003">
    <property type="entry name" value="30S ribosomal protein S18"/>
    <property type="match status" value="1"/>
</dbReference>
<dbReference type="Gene3D" id="4.10.640.10">
    <property type="entry name" value="Ribosomal protein S18"/>
    <property type="match status" value="1"/>
</dbReference>
<dbReference type="HAMAP" id="MF_00270">
    <property type="entry name" value="Ribosomal_bS18"/>
    <property type="match status" value="1"/>
</dbReference>
<dbReference type="InterPro" id="IPR001648">
    <property type="entry name" value="Ribosomal_bS18"/>
</dbReference>
<dbReference type="InterPro" id="IPR018275">
    <property type="entry name" value="Ribosomal_bS18_CS"/>
</dbReference>
<dbReference type="InterPro" id="IPR036870">
    <property type="entry name" value="Ribosomal_bS18_sf"/>
</dbReference>
<dbReference type="NCBIfam" id="TIGR00165">
    <property type="entry name" value="S18"/>
    <property type="match status" value="1"/>
</dbReference>
<dbReference type="PANTHER" id="PTHR13479">
    <property type="entry name" value="30S RIBOSOMAL PROTEIN S18"/>
    <property type="match status" value="1"/>
</dbReference>
<dbReference type="PANTHER" id="PTHR13479:SF40">
    <property type="entry name" value="SMALL RIBOSOMAL SUBUNIT PROTEIN BS18M"/>
    <property type="match status" value="1"/>
</dbReference>
<dbReference type="Pfam" id="PF01084">
    <property type="entry name" value="Ribosomal_S18"/>
    <property type="match status" value="1"/>
</dbReference>
<dbReference type="PRINTS" id="PR00974">
    <property type="entry name" value="RIBOSOMALS18"/>
</dbReference>
<dbReference type="SUPFAM" id="SSF46911">
    <property type="entry name" value="Ribosomal protein S18"/>
    <property type="match status" value="1"/>
</dbReference>
<dbReference type="PROSITE" id="PS00057">
    <property type="entry name" value="RIBOSOMAL_S18"/>
    <property type="match status" value="1"/>
</dbReference>